<feature type="chain" id="PRO_0000184790" description="Gamma-glutamylcyclotransferase family protein YtfP">
    <location>
        <begin position="1"/>
        <end position="113"/>
    </location>
</feature>
<comment type="similarity">
    <text evidence="1">Belongs to the gamma-glutamylcyclotransferase family.</text>
</comment>
<comment type="caution">
    <text evidence="1">Lacks the conserved Glu residue at position 70 that serves as proton acceptor in enzymes with gamma-glutamylcyclotransferase activity.</text>
</comment>
<evidence type="ECO:0000305" key="1"/>
<reference key="1">
    <citation type="journal article" date="2001" name="Nature">
        <title>Genome sequence of enterohaemorrhagic Escherichia coli O157:H7.</title>
        <authorList>
            <person name="Perna N.T."/>
            <person name="Plunkett G. III"/>
            <person name="Burland V."/>
            <person name="Mau B."/>
            <person name="Glasner J.D."/>
            <person name="Rose D.J."/>
            <person name="Mayhew G.F."/>
            <person name="Evans P.S."/>
            <person name="Gregor J."/>
            <person name="Kirkpatrick H.A."/>
            <person name="Posfai G."/>
            <person name="Hackett J."/>
            <person name="Klink S."/>
            <person name="Boutin A."/>
            <person name="Shao Y."/>
            <person name="Miller L."/>
            <person name="Grotbeck E.J."/>
            <person name="Davis N.W."/>
            <person name="Lim A."/>
            <person name="Dimalanta E.T."/>
            <person name="Potamousis K."/>
            <person name="Apodaca J."/>
            <person name="Anantharaman T.S."/>
            <person name="Lin J."/>
            <person name="Yen G."/>
            <person name="Schwartz D.C."/>
            <person name="Welch R.A."/>
            <person name="Blattner F.R."/>
        </authorList>
    </citation>
    <scope>NUCLEOTIDE SEQUENCE [LARGE SCALE GENOMIC DNA]</scope>
    <source>
        <strain>O157:H7 / EDL933 / ATCC 700927 / EHEC</strain>
    </source>
</reference>
<reference key="2">
    <citation type="journal article" date="2001" name="DNA Res.">
        <title>Complete genome sequence of enterohemorrhagic Escherichia coli O157:H7 and genomic comparison with a laboratory strain K-12.</title>
        <authorList>
            <person name="Hayashi T."/>
            <person name="Makino K."/>
            <person name="Ohnishi M."/>
            <person name="Kurokawa K."/>
            <person name="Ishii K."/>
            <person name="Yokoyama K."/>
            <person name="Han C.-G."/>
            <person name="Ohtsubo E."/>
            <person name="Nakayama K."/>
            <person name="Murata T."/>
            <person name="Tanaka M."/>
            <person name="Tobe T."/>
            <person name="Iida T."/>
            <person name="Takami H."/>
            <person name="Honda T."/>
            <person name="Sasakawa C."/>
            <person name="Ogasawara N."/>
            <person name="Yasunaga T."/>
            <person name="Kuhara S."/>
            <person name="Shiba T."/>
            <person name="Hattori M."/>
            <person name="Shinagawa H."/>
        </authorList>
    </citation>
    <scope>NUCLEOTIDE SEQUENCE [LARGE SCALE GENOMIC DNA]</scope>
    <source>
        <strain>O157:H7 / Sakai / RIMD 0509952 / EHEC</strain>
    </source>
</reference>
<sequence>MRIFVYGSLRHKQGNSHWMTNAQLLGDFSIDNYQLYSLGHYPGAVPGNGTVHGEVYRIDNATLAELDALRTRGGEYARQLIQTPYGSAWMYVYQRPVDGLKLIESGDWLDRDK</sequence>
<gene>
    <name type="primary">ytfP</name>
    <name type="ordered locus">Z5833</name>
    <name type="ordered locus">ECs5200</name>
</gene>
<proteinExistence type="inferred from homology"/>
<name>YTFP_ECO57</name>
<organism>
    <name type="scientific">Escherichia coli O157:H7</name>
    <dbReference type="NCBI Taxonomy" id="83334"/>
    <lineage>
        <taxon>Bacteria</taxon>
        <taxon>Pseudomonadati</taxon>
        <taxon>Pseudomonadota</taxon>
        <taxon>Gammaproteobacteria</taxon>
        <taxon>Enterobacterales</taxon>
        <taxon>Enterobacteriaceae</taxon>
        <taxon>Escherichia</taxon>
    </lineage>
</organism>
<dbReference type="EMBL" id="AE005174">
    <property type="protein sequence ID" value="AAG59420.1"/>
    <property type="molecule type" value="Genomic_DNA"/>
</dbReference>
<dbReference type="EMBL" id="BA000007">
    <property type="protein sequence ID" value="BAB38623.1"/>
    <property type="molecule type" value="Genomic_DNA"/>
</dbReference>
<dbReference type="PIR" id="H86119">
    <property type="entry name" value="H86119"/>
</dbReference>
<dbReference type="PIR" id="H91278">
    <property type="entry name" value="H91278"/>
</dbReference>
<dbReference type="RefSeq" id="NP_313227.1">
    <property type="nucleotide sequence ID" value="NC_002695.1"/>
</dbReference>
<dbReference type="RefSeq" id="WP_001219160.1">
    <property type="nucleotide sequence ID" value="NZ_VOAI01000023.1"/>
</dbReference>
<dbReference type="BMRB" id="P0AE50"/>
<dbReference type="SMR" id="P0AE50"/>
<dbReference type="STRING" id="155864.Z5833"/>
<dbReference type="GeneID" id="913921"/>
<dbReference type="KEGG" id="ece:Z5833"/>
<dbReference type="KEGG" id="ecs:ECs_5200"/>
<dbReference type="PATRIC" id="fig|386585.9.peg.5437"/>
<dbReference type="eggNOG" id="COG2105">
    <property type="taxonomic scope" value="Bacteria"/>
</dbReference>
<dbReference type="HOGENOM" id="CLU_083466_5_2_6"/>
<dbReference type="OMA" id="WIYLYQD"/>
<dbReference type="Proteomes" id="UP000000558">
    <property type="component" value="Chromosome"/>
</dbReference>
<dbReference type="Proteomes" id="UP000002519">
    <property type="component" value="Chromosome"/>
</dbReference>
<dbReference type="GO" id="GO:0005829">
    <property type="term" value="C:cytosol"/>
    <property type="evidence" value="ECO:0007669"/>
    <property type="project" value="TreeGrafter"/>
</dbReference>
<dbReference type="GO" id="GO:0061929">
    <property type="term" value="F:gamma-glutamylaminecyclotransferase activity"/>
    <property type="evidence" value="ECO:0007669"/>
    <property type="project" value="InterPro"/>
</dbReference>
<dbReference type="CDD" id="cd06661">
    <property type="entry name" value="GGCT_like"/>
    <property type="match status" value="1"/>
</dbReference>
<dbReference type="FunFam" id="3.10.490.10:FF:000001">
    <property type="entry name" value="Gamma-glutamylcyclotransferase ytfP"/>
    <property type="match status" value="1"/>
</dbReference>
<dbReference type="Gene3D" id="3.10.490.10">
    <property type="entry name" value="Gamma-glutamyl cyclotransferase-like"/>
    <property type="match status" value="1"/>
</dbReference>
<dbReference type="InterPro" id="IPR009288">
    <property type="entry name" value="AIG2-like_dom"/>
</dbReference>
<dbReference type="InterPro" id="IPR039126">
    <property type="entry name" value="GGACT"/>
</dbReference>
<dbReference type="InterPro" id="IPR013024">
    <property type="entry name" value="GGCT-like"/>
</dbReference>
<dbReference type="InterPro" id="IPR036568">
    <property type="entry name" value="GGCT-like_sf"/>
</dbReference>
<dbReference type="PANTHER" id="PTHR12510:SF4">
    <property type="entry name" value="GAMMA-GLUTAMYLAMINECYCLOTRANSFERASE"/>
    <property type="match status" value="1"/>
</dbReference>
<dbReference type="PANTHER" id="PTHR12510">
    <property type="entry name" value="TROPONIN C-AKIN-1 PROTEIN"/>
    <property type="match status" value="1"/>
</dbReference>
<dbReference type="Pfam" id="PF06094">
    <property type="entry name" value="GGACT"/>
    <property type="match status" value="1"/>
</dbReference>
<dbReference type="SUPFAM" id="SSF110857">
    <property type="entry name" value="Gamma-glutamyl cyclotransferase-like"/>
    <property type="match status" value="1"/>
</dbReference>
<keyword id="KW-1185">Reference proteome</keyword>
<protein>
    <recommendedName>
        <fullName>Gamma-glutamylcyclotransferase family protein YtfP</fullName>
    </recommendedName>
</protein>
<accession>P0AE50</accession>
<accession>P39323</accession>